<comment type="function">
    <text evidence="1">Catalyzes the reversible transfer of the terminal phosphate group between ATP and AMP. Plays an important role in cellular energy homeostasis and in adenine nucleotide metabolism.</text>
</comment>
<comment type="catalytic activity">
    <reaction evidence="1">
        <text>AMP + ATP = 2 ADP</text>
        <dbReference type="Rhea" id="RHEA:12973"/>
        <dbReference type="ChEBI" id="CHEBI:30616"/>
        <dbReference type="ChEBI" id="CHEBI:456215"/>
        <dbReference type="ChEBI" id="CHEBI:456216"/>
        <dbReference type="EC" id="2.7.4.3"/>
    </reaction>
</comment>
<comment type="pathway">
    <text evidence="1">Purine metabolism; AMP biosynthesis via salvage pathway; AMP from ADP: step 1/1.</text>
</comment>
<comment type="subunit">
    <text evidence="1">Monomer.</text>
</comment>
<comment type="subcellular location">
    <subcellularLocation>
        <location evidence="1">Cytoplasm</location>
    </subcellularLocation>
</comment>
<comment type="domain">
    <text evidence="1">Consists of three domains, a large central CORE domain and two small peripheral domains, NMPbind and LID, which undergo movements during catalysis. The LID domain closes over the site of phosphoryl transfer upon ATP binding. Assembling and dissambling the active center during each catalytic cycle provides an effective means to prevent ATP hydrolysis. Some bacteria have evolved a zinc-coordinating structure that stabilizes the LID domain.</text>
</comment>
<comment type="similarity">
    <text evidence="1">Belongs to the adenylate kinase family.</text>
</comment>
<organism>
    <name type="scientific">Lactobacillus gasseri (strain ATCC 33323 / DSM 20243 / BCRC 14619 / CIP 102991 / JCM 1131 / KCTC 3163 / NCIMB 11718 / NCTC 13722 / AM63)</name>
    <dbReference type="NCBI Taxonomy" id="324831"/>
    <lineage>
        <taxon>Bacteria</taxon>
        <taxon>Bacillati</taxon>
        <taxon>Bacillota</taxon>
        <taxon>Bacilli</taxon>
        <taxon>Lactobacillales</taxon>
        <taxon>Lactobacillaceae</taxon>
        <taxon>Lactobacillus</taxon>
    </lineage>
</organism>
<gene>
    <name evidence="1" type="primary">adk</name>
    <name type="ordered locus">LGAS_0311</name>
</gene>
<sequence length="217" mass="24229">MINLILLGLPGAGKGTASESIVDKYHLAHISTGDMFREAMANETPVGLEAKSYIDKGDLVPDEVTAKLVEERLKQPDTKNGFILDGFPRTTVQAELLEGITKRLEKPLTNVIAIDVDEDVLIKRLSARYICKNCGATYNKISNPTKVEGTCDRCGGHEFFQREDDKPEVVKNRLEVNKKMNTPLRDFYEEKGILSTVNGEQTPEKVFEDIDKILSKD</sequence>
<accession>Q046A5</accession>
<dbReference type="EC" id="2.7.4.3" evidence="1"/>
<dbReference type="EMBL" id="CP000413">
    <property type="protein sequence ID" value="ABJ59717.1"/>
    <property type="molecule type" value="Genomic_DNA"/>
</dbReference>
<dbReference type="RefSeq" id="WP_003647817.1">
    <property type="nucleotide sequence ID" value="NZ_WBMG01000001.1"/>
</dbReference>
<dbReference type="SMR" id="Q046A5"/>
<dbReference type="GeneID" id="29639545"/>
<dbReference type="KEGG" id="lga:LGAS_0311"/>
<dbReference type="HOGENOM" id="CLU_032354_1_2_9"/>
<dbReference type="BioCyc" id="LGAS324831:G1G6Y-310-MONOMER"/>
<dbReference type="UniPathway" id="UPA00588">
    <property type="reaction ID" value="UER00649"/>
</dbReference>
<dbReference type="Proteomes" id="UP000000664">
    <property type="component" value="Chromosome"/>
</dbReference>
<dbReference type="GO" id="GO:0005737">
    <property type="term" value="C:cytoplasm"/>
    <property type="evidence" value="ECO:0007669"/>
    <property type="project" value="UniProtKB-SubCell"/>
</dbReference>
<dbReference type="GO" id="GO:0004017">
    <property type="term" value="F:adenylate kinase activity"/>
    <property type="evidence" value="ECO:0007669"/>
    <property type="project" value="UniProtKB-UniRule"/>
</dbReference>
<dbReference type="GO" id="GO:0005524">
    <property type="term" value="F:ATP binding"/>
    <property type="evidence" value="ECO:0007669"/>
    <property type="project" value="UniProtKB-UniRule"/>
</dbReference>
<dbReference type="GO" id="GO:0008270">
    <property type="term" value="F:zinc ion binding"/>
    <property type="evidence" value="ECO:0007669"/>
    <property type="project" value="UniProtKB-UniRule"/>
</dbReference>
<dbReference type="GO" id="GO:0044209">
    <property type="term" value="P:AMP salvage"/>
    <property type="evidence" value="ECO:0007669"/>
    <property type="project" value="UniProtKB-UniRule"/>
</dbReference>
<dbReference type="CDD" id="cd01428">
    <property type="entry name" value="ADK"/>
    <property type="match status" value="1"/>
</dbReference>
<dbReference type="FunFam" id="3.40.50.300:FF:000106">
    <property type="entry name" value="Adenylate kinase mitochondrial"/>
    <property type="match status" value="1"/>
</dbReference>
<dbReference type="Gene3D" id="3.40.50.300">
    <property type="entry name" value="P-loop containing nucleotide triphosphate hydrolases"/>
    <property type="match status" value="1"/>
</dbReference>
<dbReference type="HAMAP" id="MF_00235">
    <property type="entry name" value="Adenylate_kinase_Adk"/>
    <property type="match status" value="1"/>
</dbReference>
<dbReference type="InterPro" id="IPR006259">
    <property type="entry name" value="Adenyl_kin_sub"/>
</dbReference>
<dbReference type="InterPro" id="IPR000850">
    <property type="entry name" value="Adenylat/UMP-CMP_kin"/>
</dbReference>
<dbReference type="InterPro" id="IPR033690">
    <property type="entry name" value="Adenylat_kinase_CS"/>
</dbReference>
<dbReference type="InterPro" id="IPR007862">
    <property type="entry name" value="Adenylate_kinase_lid-dom"/>
</dbReference>
<dbReference type="InterPro" id="IPR027417">
    <property type="entry name" value="P-loop_NTPase"/>
</dbReference>
<dbReference type="NCBIfam" id="TIGR01351">
    <property type="entry name" value="adk"/>
    <property type="match status" value="1"/>
</dbReference>
<dbReference type="NCBIfam" id="NF001380">
    <property type="entry name" value="PRK00279.1-2"/>
    <property type="match status" value="1"/>
</dbReference>
<dbReference type="NCBIfam" id="NF001381">
    <property type="entry name" value="PRK00279.1-3"/>
    <property type="match status" value="1"/>
</dbReference>
<dbReference type="PANTHER" id="PTHR23359">
    <property type="entry name" value="NUCLEOTIDE KINASE"/>
    <property type="match status" value="1"/>
</dbReference>
<dbReference type="Pfam" id="PF00406">
    <property type="entry name" value="ADK"/>
    <property type="match status" value="1"/>
</dbReference>
<dbReference type="Pfam" id="PF05191">
    <property type="entry name" value="ADK_lid"/>
    <property type="match status" value="1"/>
</dbReference>
<dbReference type="PRINTS" id="PR00094">
    <property type="entry name" value="ADENYLTKNASE"/>
</dbReference>
<dbReference type="SUPFAM" id="SSF52540">
    <property type="entry name" value="P-loop containing nucleoside triphosphate hydrolases"/>
    <property type="match status" value="1"/>
</dbReference>
<dbReference type="PROSITE" id="PS00113">
    <property type="entry name" value="ADENYLATE_KINASE"/>
    <property type="match status" value="1"/>
</dbReference>
<protein>
    <recommendedName>
        <fullName evidence="1">Adenylate kinase</fullName>
        <shortName evidence="1">AK</shortName>
        <ecNumber evidence="1">2.7.4.3</ecNumber>
    </recommendedName>
    <alternativeName>
        <fullName evidence="1">ATP-AMP transphosphorylase</fullName>
    </alternativeName>
    <alternativeName>
        <fullName evidence="1">ATP:AMP phosphotransferase</fullName>
    </alternativeName>
    <alternativeName>
        <fullName evidence="1">Adenylate monophosphate kinase</fullName>
    </alternativeName>
</protein>
<evidence type="ECO:0000255" key="1">
    <source>
        <dbReference type="HAMAP-Rule" id="MF_00235"/>
    </source>
</evidence>
<reference key="1">
    <citation type="journal article" date="2006" name="Proc. Natl. Acad. Sci. U.S.A.">
        <title>Comparative genomics of the lactic acid bacteria.</title>
        <authorList>
            <person name="Makarova K.S."/>
            <person name="Slesarev A."/>
            <person name="Wolf Y.I."/>
            <person name="Sorokin A."/>
            <person name="Mirkin B."/>
            <person name="Koonin E.V."/>
            <person name="Pavlov A."/>
            <person name="Pavlova N."/>
            <person name="Karamychev V."/>
            <person name="Polouchine N."/>
            <person name="Shakhova V."/>
            <person name="Grigoriev I."/>
            <person name="Lou Y."/>
            <person name="Rohksar D."/>
            <person name="Lucas S."/>
            <person name="Huang K."/>
            <person name="Goodstein D.M."/>
            <person name="Hawkins T."/>
            <person name="Plengvidhya V."/>
            <person name="Welker D."/>
            <person name="Hughes J."/>
            <person name="Goh Y."/>
            <person name="Benson A."/>
            <person name="Baldwin K."/>
            <person name="Lee J.-H."/>
            <person name="Diaz-Muniz I."/>
            <person name="Dosti B."/>
            <person name="Smeianov V."/>
            <person name="Wechter W."/>
            <person name="Barabote R."/>
            <person name="Lorca G."/>
            <person name="Altermann E."/>
            <person name="Barrangou R."/>
            <person name="Ganesan B."/>
            <person name="Xie Y."/>
            <person name="Rawsthorne H."/>
            <person name="Tamir D."/>
            <person name="Parker C."/>
            <person name="Breidt F."/>
            <person name="Broadbent J.R."/>
            <person name="Hutkins R."/>
            <person name="O'Sullivan D."/>
            <person name="Steele J."/>
            <person name="Unlu G."/>
            <person name="Saier M.H. Jr."/>
            <person name="Klaenhammer T."/>
            <person name="Richardson P."/>
            <person name="Kozyavkin S."/>
            <person name="Weimer B.C."/>
            <person name="Mills D.A."/>
        </authorList>
    </citation>
    <scope>NUCLEOTIDE SEQUENCE [LARGE SCALE GENOMIC DNA]</scope>
    <source>
        <strain>ATCC 33323 / DSM 20243 / BCRC 14619 / CIP 102991 / JCM 1131 / KCTC 3163 / NCIMB 11718 / NCTC 13722 / AM63</strain>
    </source>
</reference>
<feature type="chain" id="PRO_1000021734" description="Adenylate kinase">
    <location>
        <begin position="1"/>
        <end position="217"/>
    </location>
</feature>
<feature type="region of interest" description="NMP" evidence="1">
    <location>
        <begin position="31"/>
        <end position="60"/>
    </location>
</feature>
<feature type="region of interest" description="LID" evidence="1">
    <location>
        <begin position="127"/>
        <end position="165"/>
    </location>
</feature>
<feature type="binding site" evidence="1">
    <location>
        <begin position="11"/>
        <end position="16"/>
    </location>
    <ligand>
        <name>ATP</name>
        <dbReference type="ChEBI" id="CHEBI:30616"/>
    </ligand>
</feature>
<feature type="binding site" evidence="1">
    <location>
        <position position="32"/>
    </location>
    <ligand>
        <name>AMP</name>
        <dbReference type="ChEBI" id="CHEBI:456215"/>
    </ligand>
</feature>
<feature type="binding site" evidence="1">
    <location>
        <position position="37"/>
    </location>
    <ligand>
        <name>AMP</name>
        <dbReference type="ChEBI" id="CHEBI:456215"/>
    </ligand>
</feature>
<feature type="binding site" evidence="1">
    <location>
        <begin position="58"/>
        <end position="60"/>
    </location>
    <ligand>
        <name>AMP</name>
        <dbReference type="ChEBI" id="CHEBI:456215"/>
    </ligand>
</feature>
<feature type="binding site" evidence="1">
    <location>
        <begin position="86"/>
        <end position="89"/>
    </location>
    <ligand>
        <name>AMP</name>
        <dbReference type="ChEBI" id="CHEBI:456215"/>
    </ligand>
</feature>
<feature type="binding site" evidence="1">
    <location>
        <position position="93"/>
    </location>
    <ligand>
        <name>AMP</name>
        <dbReference type="ChEBI" id="CHEBI:456215"/>
    </ligand>
</feature>
<feature type="binding site" evidence="1">
    <location>
        <position position="128"/>
    </location>
    <ligand>
        <name>ATP</name>
        <dbReference type="ChEBI" id="CHEBI:30616"/>
    </ligand>
</feature>
<feature type="binding site" evidence="1">
    <location>
        <position position="131"/>
    </location>
    <ligand>
        <name>Zn(2+)</name>
        <dbReference type="ChEBI" id="CHEBI:29105"/>
        <note>structural</note>
    </ligand>
</feature>
<feature type="binding site" evidence="1">
    <location>
        <position position="134"/>
    </location>
    <ligand>
        <name>Zn(2+)</name>
        <dbReference type="ChEBI" id="CHEBI:29105"/>
        <note>structural</note>
    </ligand>
</feature>
<feature type="binding site" evidence="1">
    <location>
        <begin position="137"/>
        <end position="138"/>
    </location>
    <ligand>
        <name>ATP</name>
        <dbReference type="ChEBI" id="CHEBI:30616"/>
    </ligand>
</feature>
<feature type="binding site" evidence="1">
    <location>
        <position position="151"/>
    </location>
    <ligand>
        <name>Zn(2+)</name>
        <dbReference type="ChEBI" id="CHEBI:29105"/>
        <note>structural</note>
    </ligand>
</feature>
<feature type="binding site" evidence="1">
    <location>
        <position position="154"/>
    </location>
    <ligand>
        <name>Zn(2+)</name>
        <dbReference type="ChEBI" id="CHEBI:29105"/>
        <note>structural</note>
    </ligand>
</feature>
<feature type="binding site" evidence="1">
    <location>
        <position position="162"/>
    </location>
    <ligand>
        <name>AMP</name>
        <dbReference type="ChEBI" id="CHEBI:456215"/>
    </ligand>
</feature>
<feature type="binding site" evidence="1">
    <location>
        <position position="173"/>
    </location>
    <ligand>
        <name>AMP</name>
        <dbReference type="ChEBI" id="CHEBI:456215"/>
    </ligand>
</feature>
<feature type="binding site" evidence="1">
    <location>
        <position position="201"/>
    </location>
    <ligand>
        <name>ATP</name>
        <dbReference type="ChEBI" id="CHEBI:30616"/>
    </ligand>
</feature>
<name>KAD_LACGA</name>
<proteinExistence type="inferred from homology"/>
<keyword id="KW-0067">ATP-binding</keyword>
<keyword id="KW-0963">Cytoplasm</keyword>
<keyword id="KW-0418">Kinase</keyword>
<keyword id="KW-0479">Metal-binding</keyword>
<keyword id="KW-0545">Nucleotide biosynthesis</keyword>
<keyword id="KW-0547">Nucleotide-binding</keyword>
<keyword id="KW-0808">Transferase</keyword>
<keyword id="KW-0862">Zinc</keyword>